<keyword id="KW-0150">Chloroplast</keyword>
<keyword id="KW-0934">Plastid</keyword>
<keyword id="KW-0687">Ribonucleoprotein</keyword>
<keyword id="KW-0689">Ribosomal protein</keyword>
<keyword id="KW-0694">RNA-binding</keyword>
<keyword id="KW-0699">rRNA-binding</keyword>
<sequence length="182" mass="21086">RFKKIRRLGALPGLTSKRPRSGSDLKNPLRSGKRSQYRIRLEEKQKLRFHYGLTERQLLRYVHIARKAKGSTGQVLLQLLEMRLDNILFRLGMASTIPGARQLVNHRHILVNGRIVDIPSYRCKPRDIITTKDKQRSKALIQNFIASAPREELPNHLTIDSFQYKGLVNQIIDSKWIGLKIN</sequence>
<proteinExistence type="inferred from homology"/>
<organism>
    <name type="scientific">Scadoxus puniceus</name>
    <name type="common">Paintbrush lily</name>
    <name type="synonym">Haemanthus magnificus</name>
    <dbReference type="NCBI Taxonomy" id="59038"/>
    <lineage>
        <taxon>Eukaryota</taxon>
        <taxon>Viridiplantae</taxon>
        <taxon>Streptophyta</taxon>
        <taxon>Embryophyta</taxon>
        <taxon>Tracheophyta</taxon>
        <taxon>Spermatophyta</taxon>
        <taxon>Magnoliopsida</taxon>
        <taxon>Liliopsida</taxon>
        <taxon>Asparagales</taxon>
        <taxon>Amaryllidaceae</taxon>
        <taxon>Amaryllidoideae</taxon>
        <taxon>Scadoxus</taxon>
    </lineage>
</organism>
<evidence type="ECO:0000250" key="1"/>
<evidence type="ECO:0000256" key="2">
    <source>
        <dbReference type="SAM" id="MobiDB-lite"/>
    </source>
</evidence>
<evidence type="ECO:0000305" key="3"/>
<protein>
    <recommendedName>
        <fullName evidence="3">Small ribosomal subunit protein uS4c</fullName>
    </recommendedName>
    <alternativeName>
        <fullName>30S ribosomal protein S4, chloroplastic</fullName>
    </alternativeName>
</protein>
<comment type="function">
    <text evidence="1">One of the primary rRNA binding proteins, it binds directly to 16S rRNA where it nucleates assembly of the body of the 30S subunit.</text>
</comment>
<comment type="function">
    <text evidence="1">With S5 and S12 plays an important role in translational accuracy.</text>
</comment>
<comment type="subunit">
    <text evidence="1">Part of the 30S ribosomal subunit. Contacts protein S5. The interaction surface between S4 and S5 is involved in control of translational fidelity (By similarity).</text>
</comment>
<comment type="subcellular location">
    <subcellularLocation>
        <location>Plastid</location>
        <location>Chloroplast</location>
    </subcellularLocation>
</comment>
<comment type="similarity">
    <text evidence="3">Belongs to the universal ribosomal protein uS4 family.</text>
</comment>
<name>RR4_SCAPU</name>
<dbReference type="EMBL" id="Z68253">
    <property type="protein sequence ID" value="CAA92551.1"/>
    <property type="molecule type" value="Genomic_DNA"/>
</dbReference>
<dbReference type="SMR" id="O20231"/>
<dbReference type="GO" id="GO:0009507">
    <property type="term" value="C:chloroplast"/>
    <property type="evidence" value="ECO:0007669"/>
    <property type="project" value="UniProtKB-SubCell"/>
</dbReference>
<dbReference type="GO" id="GO:0015935">
    <property type="term" value="C:small ribosomal subunit"/>
    <property type="evidence" value="ECO:0007669"/>
    <property type="project" value="InterPro"/>
</dbReference>
<dbReference type="GO" id="GO:0019843">
    <property type="term" value="F:rRNA binding"/>
    <property type="evidence" value="ECO:0007669"/>
    <property type="project" value="UniProtKB-KW"/>
</dbReference>
<dbReference type="GO" id="GO:0003735">
    <property type="term" value="F:structural constituent of ribosome"/>
    <property type="evidence" value="ECO:0007669"/>
    <property type="project" value="InterPro"/>
</dbReference>
<dbReference type="GO" id="GO:0042274">
    <property type="term" value="P:ribosomal small subunit biogenesis"/>
    <property type="evidence" value="ECO:0007669"/>
    <property type="project" value="TreeGrafter"/>
</dbReference>
<dbReference type="GO" id="GO:0006412">
    <property type="term" value="P:translation"/>
    <property type="evidence" value="ECO:0007669"/>
    <property type="project" value="InterPro"/>
</dbReference>
<dbReference type="CDD" id="cd00165">
    <property type="entry name" value="S4"/>
    <property type="match status" value="1"/>
</dbReference>
<dbReference type="FunFam" id="1.10.1050.10:FF:000002">
    <property type="entry name" value="30S ribosomal protein S4, chloroplastic"/>
    <property type="match status" value="1"/>
</dbReference>
<dbReference type="FunFam" id="3.10.290.10:FF:000081">
    <property type="entry name" value="30S ribosomal protein S4, chloroplastic"/>
    <property type="match status" value="1"/>
</dbReference>
<dbReference type="Gene3D" id="1.10.1050.10">
    <property type="entry name" value="Ribosomal Protein S4 Delta 41, Chain A, domain 1"/>
    <property type="match status" value="1"/>
</dbReference>
<dbReference type="Gene3D" id="3.10.290.10">
    <property type="entry name" value="RNA-binding S4 domain"/>
    <property type="match status" value="1"/>
</dbReference>
<dbReference type="HAMAP" id="MF_01306_B">
    <property type="entry name" value="Ribosomal_uS4_B"/>
    <property type="match status" value="1"/>
</dbReference>
<dbReference type="InterPro" id="IPR022801">
    <property type="entry name" value="Ribosomal_uS4"/>
</dbReference>
<dbReference type="InterPro" id="IPR005709">
    <property type="entry name" value="Ribosomal_uS4_bac-type"/>
</dbReference>
<dbReference type="InterPro" id="IPR018079">
    <property type="entry name" value="Ribosomal_uS4_CS"/>
</dbReference>
<dbReference type="InterPro" id="IPR001912">
    <property type="entry name" value="Ribosomal_uS4_N"/>
</dbReference>
<dbReference type="InterPro" id="IPR002942">
    <property type="entry name" value="S4_RNA-bd"/>
</dbReference>
<dbReference type="InterPro" id="IPR036986">
    <property type="entry name" value="S4_RNA-bd_sf"/>
</dbReference>
<dbReference type="NCBIfam" id="NF003717">
    <property type="entry name" value="PRK05327.1"/>
    <property type="match status" value="1"/>
</dbReference>
<dbReference type="NCBIfam" id="TIGR01017">
    <property type="entry name" value="rpsD_bact"/>
    <property type="match status" value="1"/>
</dbReference>
<dbReference type="PANTHER" id="PTHR11831">
    <property type="entry name" value="30S 40S RIBOSOMAL PROTEIN"/>
    <property type="match status" value="1"/>
</dbReference>
<dbReference type="PANTHER" id="PTHR11831:SF4">
    <property type="entry name" value="SMALL RIBOSOMAL SUBUNIT PROTEIN US4M"/>
    <property type="match status" value="1"/>
</dbReference>
<dbReference type="Pfam" id="PF00163">
    <property type="entry name" value="Ribosomal_S4"/>
    <property type="match status" value="1"/>
</dbReference>
<dbReference type="Pfam" id="PF01479">
    <property type="entry name" value="S4"/>
    <property type="match status" value="1"/>
</dbReference>
<dbReference type="SMART" id="SM01390">
    <property type="entry name" value="Ribosomal_S4"/>
    <property type="match status" value="1"/>
</dbReference>
<dbReference type="SMART" id="SM00363">
    <property type="entry name" value="S4"/>
    <property type="match status" value="1"/>
</dbReference>
<dbReference type="SUPFAM" id="SSF55174">
    <property type="entry name" value="Alpha-L RNA-binding motif"/>
    <property type="match status" value="1"/>
</dbReference>
<dbReference type="PROSITE" id="PS00632">
    <property type="entry name" value="RIBOSOMAL_S4"/>
    <property type="match status" value="1"/>
</dbReference>
<dbReference type="PROSITE" id="PS50889">
    <property type="entry name" value="S4"/>
    <property type="match status" value="1"/>
</dbReference>
<accession>O20231</accession>
<reference key="1">
    <citation type="journal article" date="1997" name="Plant Syst. Evol.">
        <title>Phylogenetic analysis of Iridaceae with parsimony and distance methods using the plastid gene rps4.</title>
        <authorList>
            <person name="Souza-Chies T.T."/>
            <person name="Bittar G."/>
            <person name="Nadot S."/>
            <person name="Carter L."/>
            <person name="Besin E."/>
            <person name="Lejeune B.P."/>
        </authorList>
    </citation>
    <scope>NUCLEOTIDE SEQUENCE [GENOMIC DNA]</scope>
</reference>
<gene>
    <name type="primary">rps4</name>
</gene>
<feature type="chain" id="PRO_0000132599" description="Small ribosomal subunit protein uS4c">
    <location>
        <begin position="1" status="less than"/>
        <end position="182" status="greater than"/>
    </location>
</feature>
<feature type="domain" description="S4 RNA-binding">
    <location>
        <begin position="82"/>
        <end position="143"/>
    </location>
</feature>
<feature type="region of interest" description="Disordered" evidence="2">
    <location>
        <begin position="13"/>
        <end position="32"/>
    </location>
</feature>
<feature type="non-terminal residue">
    <location>
        <position position="1"/>
    </location>
</feature>
<feature type="non-terminal residue">
    <location>
        <position position="182"/>
    </location>
</feature>
<geneLocation type="chloroplast"/>